<feature type="chain" id="PRO_1000215254" description="Probable cell division protein WhiA">
    <location>
        <begin position="1"/>
        <end position="326"/>
    </location>
</feature>
<feature type="DNA-binding region" description="H-T-H motif" evidence="1">
    <location>
        <begin position="275"/>
        <end position="308"/>
    </location>
</feature>
<dbReference type="EMBL" id="CP001618">
    <property type="protein sequence ID" value="ACQ80424.1"/>
    <property type="molecule type" value="Genomic_DNA"/>
</dbReference>
<dbReference type="RefSeq" id="WP_015882664.1">
    <property type="nucleotide sequence ID" value="NC_012669.1"/>
</dbReference>
<dbReference type="SMR" id="C5BV37"/>
<dbReference type="STRING" id="471853.Bcav_2172"/>
<dbReference type="KEGG" id="bcv:Bcav_2172"/>
<dbReference type="eggNOG" id="COG1481">
    <property type="taxonomic scope" value="Bacteria"/>
</dbReference>
<dbReference type="HOGENOM" id="CLU_053282_0_0_11"/>
<dbReference type="OrthoDB" id="5197218at2"/>
<dbReference type="Proteomes" id="UP000007962">
    <property type="component" value="Chromosome"/>
</dbReference>
<dbReference type="GO" id="GO:0003677">
    <property type="term" value="F:DNA binding"/>
    <property type="evidence" value="ECO:0007669"/>
    <property type="project" value="UniProtKB-UniRule"/>
</dbReference>
<dbReference type="GO" id="GO:0051301">
    <property type="term" value="P:cell division"/>
    <property type="evidence" value="ECO:0007669"/>
    <property type="project" value="UniProtKB-UniRule"/>
</dbReference>
<dbReference type="GO" id="GO:0043937">
    <property type="term" value="P:regulation of sporulation"/>
    <property type="evidence" value="ECO:0007669"/>
    <property type="project" value="InterPro"/>
</dbReference>
<dbReference type="FunFam" id="3.10.28.10:FF:000001">
    <property type="entry name" value="Probable cell division protein WhiA"/>
    <property type="match status" value="1"/>
</dbReference>
<dbReference type="Gene3D" id="3.10.28.10">
    <property type="entry name" value="Homing endonucleases"/>
    <property type="match status" value="1"/>
</dbReference>
<dbReference type="HAMAP" id="MF_01420">
    <property type="entry name" value="HTH_type_WhiA"/>
    <property type="match status" value="1"/>
</dbReference>
<dbReference type="InterPro" id="IPR027434">
    <property type="entry name" value="Homing_endonucl"/>
</dbReference>
<dbReference type="InterPro" id="IPR018478">
    <property type="entry name" value="Sporu_reg_WhiA_N_dom"/>
</dbReference>
<dbReference type="InterPro" id="IPR003802">
    <property type="entry name" value="Sporulation_regulator_WhiA"/>
</dbReference>
<dbReference type="InterPro" id="IPR023054">
    <property type="entry name" value="Sporulation_regulator_WhiA_C"/>
</dbReference>
<dbReference type="InterPro" id="IPR039518">
    <property type="entry name" value="WhiA_LAGLIDADG_dom"/>
</dbReference>
<dbReference type="NCBIfam" id="TIGR00647">
    <property type="entry name" value="DNA_bind_WhiA"/>
    <property type="match status" value="1"/>
</dbReference>
<dbReference type="PANTHER" id="PTHR37307">
    <property type="entry name" value="CELL DIVISION PROTEIN WHIA-RELATED"/>
    <property type="match status" value="1"/>
</dbReference>
<dbReference type="PANTHER" id="PTHR37307:SF1">
    <property type="entry name" value="CELL DIVISION PROTEIN WHIA-RELATED"/>
    <property type="match status" value="1"/>
</dbReference>
<dbReference type="Pfam" id="PF02650">
    <property type="entry name" value="HTH_WhiA"/>
    <property type="match status" value="1"/>
</dbReference>
<dbReference type="Pfam" id="PF14527">
    <property type="entry name" value="LAGLIDADG_WhiA"/>
    <property type="match status" value="1"/>
</dbReference>
<dbReference type="Pfam" id="PF10298">
    <property type="entry name" value="WhiA_N"/>
    <property type="match status" value="1"/>
</dbReference>
<organism>
    <name type="scientific">Beutenbergia cavernae (strain ATCC BAA-8 / DSM 12333 / CCUG 43141 / JCM 11478 / NBRC 16432 / NCIMB 13614 / HKI 0122)</name>
    <dbReference type="NCBI Taxonomy" id="471853"/>
    <lineage>
        <taxon>Bacteria</taxon>
        <taxon>Bacillati</taxon>
        <taxon>Actinomycetota</taxon>
        <taxon>Actinomycetes</taxon>
        <taxon>Micrococcales</taxon>
        <taxon>Beutenbergiaceae</taxon>
        <taxon>Beutenbergia</taxon>
    </lineage>
</organism>
<comment type="function">
    <text evidence="1">Involved in cell division and chromosome segregation.</text>
</comment>
<comment type="similarity">
    <text evidence="1">Belongs to the WhiA family.</text>
</comment>
<gene>
    <name evidence="1" type="primary">whiA</name>
    <name type="ordered locus">Bcav_2172</name>
</gene>
<reference key="1">
    <citation type="journal article" date="2009" name="Stand. Genomic Sci.">
        <title>Complete genome sequence of Beutenbergia cavernae type strain (HKI 0122).</title>
        <authorList>
            <person name="Land M."/>
            <person name="Pukall R."/>
            <person name="Abt B."/>
            <person name="Goker M."/>
            <person name="Rohde M."/>
            <person name="Glavina Del Rio T."/>
            <person name="Tice H."/>
            <person name="Copeland A."/>
            <person name="Cheng J.F."/>
            <person name="Lucas S."/>
            <person name="Chen F."/>
            <person name="Nolan M."/>
            <person name="Bruce D."/>
            <person name="Goodwin L."/>
            <person name="Pitluck S."/>
            <person name="Ivanova N."/>
            <person name="Mavromatis K."/>
            <person name="Ovchinnikova G."/>
            <person name="Pati A."/>
            <person name="Chen A."/>
            <person name="Palaniappan K."/>
            <person name="Hauser L."/>
            <person name="Chang Y.J."/>
            <person name="Jefferies C.C."/>
            <person name="Saunders E."/>
            <person name="Brettin T."/>
            <person name="Detter J.C."/>
            <person name="Han C."/>
            <person name="Chain P."/>
            <person name="Bristow J."/>
            <person name="Eisen J.A."/>
            <person name="Markowitz V."/>
            <person name="Hugenholtz P."/>
            <person name="Kyrpides N.C."/>
            <person name="Klenk H.P."/>
            <person name="Lapidus A."/>
        </authorList>
    </citation>
    <scope>NUCLEOTIDE SEQUENCE [LARGE SCALE GENOMIC DNA]</scope>
    <source>
        <strain>ATCC BAA-8 / DSM 12333 / CCUG 43141 / JCM 11478 / NBRC 16432 / NCIMB 13614 / HKI 0122</strain>
    </source>
</reference>
<keyword id="KW-0131">Cell cycle</keyword>
<keyword id="KW-0132">Cell division</keyword>
<keyword id="KW-0238">DNA-binding</keyword>
<keyword id="KW-1185">Reference proteome</keyword>
<proteinExistence type="inferred from homology"/>
<evidence type="ECO:0000255" key="1">
    <source>
        <dbReference type="HAMAP-Rule" id="MF_01420"/>
    </source>
</evidence>
<name>WHIA_BEUC1</name>
<protein>
    <recommendedName>
        <fullName evidence="1">Probable cell division protein WhiA</fullName>
    </recommendedName>
</protein>
<accession>C5BV37</accession>
<sequence>MSLTAAVKDELARVRVDKISSRKAEVSATLRFAGGLHIISGRIVIEAELDAAIAARRLRVAIAEVYGHVSDIIVVSGGALRKGNRYVVRVVRDGEALARQTGLLDSRGRPVRGLPPQVVSASIGDTVAAWRGAFLAHGSLTEPGRSSALEVTCPGPEAALALVGAARRLGITSKAREVRGVDRVVIRDGDAISAILTRMGAHDAVLAWEERRMRREVRGTANRLANFDDANLRRSARAAVAASARVERAFEILAEDVPDHLVEAGRLRLENKQASLEELGQLSDPPLTKDAVAGRIRRLLAMADKKASDLGIPDTESILTPEMLDL</sequence>